<reference key="1">
    <citation type="journal article" date="2009" name="PLoS Genet.">
        <title>Organised genome dynamics in the Escherichia coli species results in highly diverse adaptive paths.</title>
        <authorList>
            <person name="Touchon M."/>
            <person name="Hoede C."/>
            <person name="Tenaillon O."/>
            <person name="Barbe V."/>
            <person name="Baeriswyl S."/>
            <person name="Bidet P."/>
            <person name="Bingen E."/>
            <person name="Bonacorsi S."/>
            <person name="Bouchier C."/>
            <person name="Bouvet O."/>
            <person name="Calteau A."/>
            <person name="Chiapello H."/>
            <person name="Clermont O."/>
            <person name="Cruveiller S."/>
            <person name="Danchin A."/>
            <person name="Diard M."/>
            <person name="Dossat C."/>
            <person name="Karoui M.E."/>
            <person name="Frapy E."/>
            <person name="Garry L."/>
            <person name="Ghigo J.M."/>
            <person name="Gilles A.M."/>
            <person name="Johnson J."/>
            <person name="Le Bouguenec C."/>
            <person name="Lescat M."/>
            <person name="Mangenot S."/>
            <person name="Martinez-Jehanne V."/>
            <person name="Matic I."/>
            <person name="Nassif X."/>
            <person name="Oztas S."/>
            <person name="Petit M.A."/>
            <person name="Pichon C."/>
            <person name="Rouy Z."/>
            <person name="Ruf C.S."/>
            <person name="Schneider D."/>
            <person name="Tourret J."/>
            <person name="Vacherie B."/>
            <person name="Vallenet D."/>
            <person name="Medigue C."/>
            <person name="Rocha E.P.C."/>
            <person name="Denamur E."/>
        </authorList>
    </citation>
    <scope>NUCLEOTIDE SEQUENCE [LARGE SCALE GENOMIC DNA]</scope>
    <source>
        <strain>ATCC 35469 / DSM 13698 / BCRC 15582 / CCUG 18766 / IAM 14443 / JCM 21226 / LMG 7866 / NBRC 102419 / NCTC 12128 / CDC 0568-73</strain>
    </source>
</reference>
<feature type="chain" id="PRO_1000136008" description="Probable phosphoglycerate mutase GpmB">
    <location>
        <begin position="1"/>
        <end position="215"/>
    </location>
</feature>
<feature type="active site" description="Tele-phosphohistidine intermediate" evidence="1">
    <location>
        <position position="9"/>
    </location>
</feature>
<feature type="active site" description="Proton donor/acceptor" evidence="1">
    <location>
        <position position="82"/>
    </location>
</feature>
<feature type="binding site" evidence="1">
    <location>
        <begin position="8"/>
        <end position="15"/>
    </location>
    <ligand>
        <name>substrate</name>
    </ligand>
</feature>
<feature type="binding site" evidence="1">
    <location>
        <begin position="21"/>
        <end position="22"/>
    </location>
    <ligand>
        <name>substrate</name>
    </ligand>
</feature>
<feature type="binding site" evidence="1">
    <location>
        <position position="58"/>
    </location>
    <ligand>
        <name>substrate</name>
    </ligand>
</feature>
<feature type="binding site" evidence="1">
    <location>
        <position position="60"/>
    </location>
    <ligand>
        <name>substrate</name>
    </ligand>
</feature>
<feature type="binding site" evidence="1">
    <location>
        <begin position="82"/>
        <end position="85"/>
    </location>
    <ligand>
        <name>substrate</name>
    </ligand>
</feature>
<feature type="binding site" evidence="1">
    <location>
        <begin position="104"/>
        <end position="105"/>
    </location>
    <ligand>
        <name>substrate</name>
    </ligand>
</feature>
<feature type="binding site" evidence="1">
    <location>
        <begin position="151"/>
        <end position="152"/>
    </location>
    <ligand>
        <name>substrate</name>
    </ligand>
</feature>
<feature type="site" description="Transition state stabilizer" evidence="1">
    <location>
        <position position="150"/>
    </location>
</feature>
<protein>
    <recommendedName>
        <fullName evidence="1">Probable phosphoglycerate mutase GpmB</fullName>
        <ecNumber evidence="1">5.4.2.-</ecNumber>
    </recommendedName>
    <alternativeName>
        <fullName evidence="1">PGAM</fullName>
    </alternativeName>
    <alternativeName>
        <fullName evidence="1">Phosphoglyceromutase</fullName>
    </alternativeName>
</protein>
<dbReference type="EC" id="5.4.2.-" evidence="1"/>
<dbReference type="EMBL" id="CU928158">
    <property type="protein sequence ID" value="CAQ91907.1"/>
    <property type="molecule type" value="Genomic_DNA"/>
</dbReference>
<dbReference type="RefSeq" id="WP_000942353.1">
    <property type="nucleotide sequence ID" value="NC_011740.1"/>
</dbReference>
<dbReference type="SMR" id="B7LNT7"/>
<dbReference type="GeneID" id="75058919"/>
<dbReference type="KEGG" id="efe:EFER_4494"/>
<dbReference type="HOGENOM" id="CLU_033323_9_5_6"/>
<dbReference type="OrthoDB" id="9783269at2"/>
<dbReference type="UniPathway" id="UPA00109">
    <property type="reaction ID" value="UER00186"/>
</dbReference>
<dbReference type="Proteomes" id="UP000000745">
    <property type="component" value="Chromosome"/>
</dbReference>
<dbReference type="GO" id="GO:0005737">
    <property type="term" value="C:cytoplasm"/>
    <property type="evidence" value="ECO:0007669"/>
    <property type="project" value="TreeGrafter"/>
</dbReference>
<dbReference type="GO" id="GO:0016791">
    <property type="term" value="F:phosphatase activity"/>
    <property type="evidence" value="ECO:0007669"/>
    <property type="project" value="TreeGrafter"/>
</dbReference>
<dbReference type="GO" id="GO:0004619">
    <property type="term" value="F:phosphoglycerate mutase activity"/>
    <property type="evidence" value="ECO:0007669"/>
    <property type="project" value="UniProtKB-UniRule"/>
</dbReference>
<dbReference type="GO" id="GO:0006096">
    <property type="term" value="P:glycolytic process"/>
    <property type="evidence" value="ECO:0007669"/>
    <property type="project" value="UniProtKB-UniRule"/>
</dbReference>
<dbReference type="CDD" id="cd07067">
    <property type="entry name" value="HP_PGM_like"/>
    <property type="match status" value="1"/>
</dbReference>
<dbReference type="Gene3D" id="3.40.50.1240">
    <property type="entry name" value="Phosphoglycerate mutase-like"/>
    <property type="match status" value="1"/>
</dbReference>
<dbReference type="HAMAP" id="MF_01040">
    <property type="entry name" value="PGAM_GpmB"/>
    <property type="match status" value="1"/>
</dbReference>
<dbReference type="InterPro" id="IPR013078">
    <property type="entry name" value="His_Pase_superF_clade-1"/>
</dbReference>
<dbReference type="InterPro" id="IPR029033">
    <property type="entry name" value="His_PPase_superfam"/>
</dbReference>
<dbReference type="InterPro" id="IPR001345">
    <property type="entry name" value="PG/BPGM_mutase_AS"/>
</dbReference>
<dbReference type="InterPro" id="IPR050275">
    <property type="entry name" value="PGM_Phosphatase"/>
</dbReference>
<dbReference type="InterPro" id="IPR023086">
    <property type="entry name" value="Phosphoglycerate_mutase_GpmB"/>
</dbReference>
<dbReference type="NCBIfam" id="NF002901">
    <property type="entry name" value="PRK03482.1"/>
    <property type="match status" value="1"/>
</dbReference>
<dbReference type="PANTHER" id="PTHR48100">
    <property type="entry name" value="BROAD-SPECIFICITY PHOSPHATASE YOR283W-RELATED"/>
    <property type="match status" value="1"/>
</dbReference>
<dbReference type="PANTHER" id="PTHR48100:SF1">
    <property type="entry name" value="HISTIDINE PHOSPHATASE FAMILY PROTEIN-RELATED"/>
    <property type="match status" value="1"/>
</dbReference>
<dbReference type="Pfam" id="PF00300">
    <property type="entry name" value="His_Phos_1"/>
    <property type="match status" value="1"/>
</dbReference>
<dbReference type="SMART" id="SM00855">
    <property type="entry name" value="PGAM"/>
    <property type="match status" value="1"/>
</dbReference>
<dbReference type="SUPFAM" id="SSF53254">
    <property type="entry name" value="Phosphoglycerate mutase-like"/>
    <property type="match status" value="1"/>
</dbReference>
<dbReference type="PROSITE" id="PS00175">
    <property type="entry name" value="PG_MUTASE"/>
    <property type="match status" value="1"/>
</dbReference>
<evidence type="ECO:0000255" key="1">
    <source>
        <dbReference type="HAMAP-Rule" id="MF_01040"/>
    </source>
</evidence>
<gene>
    <name evidence="1" type="primary">gpmB</name>
    <name type="ordered locus">EFER_4494</name>
</gene>
<proteinExistence type="inferred from homology"/>
<name>GPMB_ESCF3</name>
<comment type="catalytic activity">
    <reaction evidence="1">
        <text>(2R)-2-phosphoglycerate = (2R)-3-phosphoglycerate</text>
        <dbReference type="Rhea" id="RHEA:15901"/>
        <dbReference type="ChEBI" id="CHEBI:58272"/>
        <dbReference type="ChEBI" id="CHEBI:58289"/>
    </reaction>
</comment>
<comment type="pathway">
    <text evidence="1">Carbohydrate degradation; glycolysis; pyruvate from D-glyceraldehyde 3-phosphate: step 3/5.</text>
</comment>
<comment type="similarity">
    <text evidence="1">Belongs to the phosphoglycerate mutase family. GpmB subfamily.</text>
</comment>
<organism>
    <name type="scientific">Escherichia fergusonii (strain ATCC 35469 / DSM 13698 / CCUG 18766 / IAM 14443 / JCM 21226 / LMG 7866 / NBRC 102419 / NCTC 12128 / CDC 0568-73)</name>
    <dbReference type="NCBI Taxonomy" id="585054"/>
    <lineage>
        <taxon>Bacteria</taxon>
        <taxon>Pseudomonadati</taxon>
        <taxon>Pseudomonadota</taxon>
        <taxon>Gammaproteobacteria</taxon>
        <taxon>Enterobacterales</taxon>
        <taxon>Enterobacteriaceae</taxon>
        <taxon>Escherichia</taxon>
    </lineage>
</organism>
<sequence length="215" mass="24003">MLQVYLVRHGETQWNAERRIQGQSDSPLTAKGEQQAMQVATRAKELGITHIISSDLGRTRRTAEIIAQACGCDILLDPRLRELNMGVLETRNIDSLTEEEENWRRQLVNGTKDGRIPQGESMLELSERMHSALASCLELPQGSRPLLVSHGIALGCLVSTILGLPAWAERRLRLRNCSISRVDYQESQWLASGWVVETAGDVSHLDAPALDELQR</sequence>
<keyword id="KW-0324">Glycolysis</keyword>
<keyword id="KW-0413">Isomerase</keyword>
<accession>B7LNT7</accession>